<proteinExistence type="evidence at protein level"/>
<reference key="1">
    <citation type="journal article" date="2001" name="J. Biol. Chem.">
        <title>An ERG channel inhibitor from the scorpion Buthus eupeus.</title>
        <authorList>
            <person name="Korolkova Y.V."/>
            <person name="Kozlov S.A."/>
            <person name="Lipkin A.V."/>
            <person name="Pluzhnikov K.A."/>
            <person name="Hadley J.K."/>
            <person name="Filippov A.K."/>
            <person name="Brown D.A."/>
            <person name="Angelo K."/>
            <person name="Strobaek D."/>
            <person name="Jespersen T."/>
            <person name="Olesen S.-P."/>
            <person name="Jensen B.S."/>
            <person name="Grishin E.V."/>
        </authorList>
    </citation>
    <scope>NUCLEOTIDE SEQUENCE [MRNA]</scope>
    <scope>PROTEIN SEQUENCE OF 22-57</scope>
    <scope>FUNCTION</scope>
    <scope>MUTAGENESIS OF ARG-48 AND PHE-53</scope>
    <scope>SUBCELLULAR LOCATION</scope>
    <source>
        <tissue>Venom</tissue>
        <tissue>Venom gland</tissue>
    </source>
</reference>
<reference key="2">
    <citation type="journal article" date="1996" name="FEBS Lett.">
        <title>M-type K+ current inhibition by a toxin from the scorpion Buthus eupeus.</title>
        <authorList>
            <person name="Filippov A.K."/>
            <person name="Kozlov S.A."/>
            <person name="Pluzhnikov K.A."/>
            <person name="Grishin E.V."/>
            <person name="Brown D.A."/>
        </authorList>
    </citation>
    <scope>FUNCTION</scope>
</reference>
<reference key="3">
    <citation type="journal article" date="2003" name="Biophys. J.">
        <title>BeKm-1 is a HERG-specific toxin that shares the structure with ChTx but the mechanism of action with ErgTx1.</title>
        <authorList>
            <person name="Zhang M."/>
            <person name="Korolkova Y.V."/>
            <person name="Liu J."/>
            <person name="Jiang M."/>
            <person name="Grishin E.V."/>
            <person name="Tseng G.N."/>
        </authorList>
    </citation>
    <scope>FUNCTION</scope>
</reference>
<reference key="4">
    <citation type="journal article" date="2003" name="FEBS Lett.">
        <title>Preferential closed channel blockade of HERG potassium currents by chemically synthesised BeKm-1 scorpion toxin.</title>
        <authorList>
            <person name="Milnes J.T."/>
            <person name="Dempsey C.E."/>
            <person name="Ridley J.M."/>
            <person name="Crociani O."/>
            <person name="Arcangeli A."/>
            <person name="Hancox J.C."/>
            <person name="Witchel H.J."/>
        </authorList>
    </citation>
    <scope>SYNTHESIS OF 22-57</scope>
    <scope>FUNCTION</scope>
</reference>
<reference key="5">
    <citation type="journal article" date="2004" name="J. Mol. Recognit.">
        <title>Unique interaction of scorpion toxins with the hERG channel.</title>
        <authorList>
            <person name="Korolkova Y.V."/>
            <person name="Tseng G.N."/>
            <person name="Grishin E.V."/>
        </authorList>
    </citation>
    <scope>REVIEW</scope>
    <scope>ERG1-TOXIN DOCKING MODELING</scope>
</reference>
<reference key="6">
    <citation type="journal article" date="2006" name="Mol. Pharmacol.">
        <title>Species diversity and peptide toxins blocking selectivity of ether-a-go-go-related gene subfamily K+ channels in the central nervous system.</title>
        <authorList>
            <person name="Restano-Cassulini R."/>
            <person name="Korolkova Y.V."/>
            <person name="Diochot S."/>
            <person name="Gurrola G."/>
            <person name="Guasti L."/>
            <person name="Possani L.D."/>
            <person name="Lazdunski M."/>
            <person name="Grishin E.V."/>
            <person name="Arcangeli A."/>
            <person name="Wanke E."/>
        </authorList>
    </citation>
    <scope>FUNCTION</scope>
</reference>
<reference key="7">
    <citation type="journal article" date="2011" name="J. Pharmacol. Exp. Ther.">
        <title>BeKm-1, a peptide inhibitor of human ether-a-go-go-related gene potassium currents, prolongs QTc intervals in isolated rabbit heart.</title>
        <authorList>
            <person name="Qu Y."/>
            <person name="Fang M."/>
            <person name="Gao B."/>
            <person name="Chui R.W."/>
            <person name="Vargas H.M."/>
        </authorList>
    </citation>
    <scope>FUNCTION</scope>
    <scope>FUNCTION ON RABBIT HEART</scope>
</reference>
<reference key="8">
    <citation type="journal article" date="2002" name="FEBS Lett.">
        <title>A large number of novel Ergtoxin-like genes and ERG K+-channels blocking peptides from scorpions of the genus Centruroides.</title>
        <authorList>
            <person name="Corona M."/>
            <person name="Gurrola G.B."/>
            <person name="Merino E."/>
            <person name="Cassulini R.R."/>
            <person name="Valdez-Cruz N.A."/>
            <person name="Garcia B."/>
            <person name="Ramirez-Dominguez M.E."/>
            <person name="Coronas F.I."/>
            <person name="Zamudio F.Z."/>
            <person name="Wanke E."/>
            <person name="Possani L.D."/>
        </authorList>
    </citation>
    <scope>NOMENCLATURE</scope>
</reference>
<reference key="9">
    <citation type="journal article" date="2007" name="J. Proteome Res.">
        <title>Interaction simulation of hERG K+ channel with its specific BeKm-1 peptide: insights into the selectivity of molecular recognition.</title>
        <authorList>
            <person name="Yi H."/>
            <person name="Cao Z."/>
            <person name="Yin S."/>
            <person name="Dai C."/>
            <person name="Wu Y."/>
            <person name="Li W."/>
        </authorList>
    </citation>
    <scope>CHANNEL-TOXIN INTERACTION MODELING</scope>
</reference>
<reference key="10">
    <citation type="journal article" date="2002" name="J. Biol. Chem.">
        <title>New binding site on common molecular scaffold provides HERG channel specificity of scorpion toxin BeKm-1.</title>
        <authorList>
            <person name="Korolkova Y.V."/>
            <person name="Bocharov E.V."/>
            <person name="Angelo K."/>
            <person name="Maslennikov I.V."/>
            <person name="Grinenko O.V."/>
            <person name="Lipkin A.V."/>
            <person name="Nosyreva E.D."/>
            <person name="Pluzhnikov K.A."/>
            <person name="Olesen S.-P."/>
            <person name="Arseniev A.S."/>
            <person name="Grishin E.V."/>
        </authorList>
    </citation>
    <scope>STRUCTURE BY NMR OF 22-57</scope>
    <scope>DISULFIDE BONDS</scope>
    <scope>MUTAGENESIS OF ARG-22; PRO-23; ASP-25; LYS-27; GLU-30; TYR-32; GLN-33; PHE-35; LYS-39; ARG-41; PHE-42; LYS-44; ARG-48; VAL-50; PHE-53; ASP-55 AND PHE-57</scope>
</reference>
<feature type="signal peptide" evidence="1">
    <location>
        <begin position="1"/>
        <end position="21"/>
    </location>
</feature>
<feature type="chain" id="PRO_0000035313" description="Potassium channel toxin gamma-KTx 2.1" evidence="1">
    <location>
        <begin position="22"/>
        <end position="57"/>
    </location>
</feature>
<feature type="site" description="Crucial for Kv11/ERG channel binding, plugs its side chain into the channel selectivity filter" evidence="12 14">
    <location>
        <position position="39"/>
    </location>
</feature>
<feature type="site" description="Crucial for Kv11/ERG channel binding" evidence="12 14">
    <location>
        <position position="41"/>
    </location>
</feature>
<feature type="disulfide bond" evidence="2">
    <location>
        <begin position="28"/>
        <end position="49"/>
    </location>
</feature>
<feature type="disulfide bond" evidence="2">
    <location>
        <begin position="34"/>
        <end position="54"/>
    </location>
</feature>
<feature type="disulfide bond" evidence="2">
    <location>
        <begin position="38"/>
        <end position="56"/>
    </location>
</feature>
<feature type="mutagenesis site" description="6.7-fold decrease in affinity to Kv11/ERG potassium channels." evidence="2">
    <original>R</original>
    <variation>A</variation>
    <location>
        <position position="22"/>
    </location>
</feature>
<feature type="mutagenesis site" description="1.7-fold decrease in affinity to Kv11/ERG potassium channels." evidence="2">
    <original>P</original>
    <variation>A</variation>
    <location>
        <position position="23"/>
    </location>
</feature>
<feature type="mutagenesis site" description="3.4-fold decrease in affinity to Kv11/ERG potassium channels." evidence="2">
    <original>D</original>
    <variation>A</variation>
    <location>
        <position position="25"/>
    </location>
</feature>
<feature type="mutagenesis site" description="2.7-fold decrease in affinity to Kv11/ERG potassium channels." evidence="2">
    <original>K</original>
    <variation>A</variation>
    <location>
        <position position="27"/>
    </location>
</feature>
<feature type="mutagenesis site" description="0.8-fold decrease in affinity to Kv11/ERG potassium channels." evidence="2">
    <original>E</original>
    <variation>A</variation>
    <location>
        <position position="30"/>
    </location>
</feature>
<feature type="mutagenesis site" description="14.7-fold decrease in affinity to Kv11/ERG potassium channels." evidence="2">
    <original>Y</original>
    <variation>A</variation>
    <location>
        <position position="32"/>
    </location>
</feature>
<feature type="mutagenesis site" description="2.3-fold decrease in affinity to Kv11/ERG potassium channels." evidence="2">
    <original>Q</original>
    <variation>A</variation>
    <location>
        <position position="33"/>
    </location>
</feature>
<feature type="mutagenesis site" description="8.2-fold decrease in affinity to Kv11/ERG potassium channels." evidence="2">
    <original>F</original>
    <variation>A</variation>
    <location>
        <position position="35"/>
    </location>
</feature>
<feature type="mutagenesis site" description="86.4-fold decrease in affinity to Kv11/ERG potassium channels." evidence="2">
    <original>K</original>
    <variation>A</variation>
    <location>
        <position position="39"/>
    </location>
</feature>
<feature type="mutagenesis site" description="70.6-fold decrease in affinity to Kv11/ERG potassium channels." evidence="2">
    <original>R</original>
    <variation>A</variation>
    <location>
        <position position="41"/>
    </location>
</feature>
<feature type="mutagenesis site" description="52.2-fold decrease in affinity to Kv11/ERG potassium channels." evidence="2">
    <original>F</original>
    <variation>A</variation>
    <location>
        <position position="42"/>
    </location>
</feature>
<feature type="mutagenesis site" description="14.6-fold decrease in affinity to Kv11/ERG potassium channels." evidence="2">
    <original>K</original>
    <variation>A</variation>
    <location>
        <position position="44"/>
    </location>
</feature>
<feature type="mutagenesis site" description="7.4-fold decrease in affinity to Kv11/ERG potassium channels.">
    <original>R</original>
    <variation>A</variation>
    <location>
        <position position="48"/>
    </location>
</feature>
<feature type="mutagenesis site" description="60% loss of toxicity. No loss of activity; when associated with K-53." evidence="1 2">
    <original>R</original>
    <variation>K</variation>
    <location>
        <position position="48"/>
    </location>
</feature>
<feature type="mutagenesis site" description="1.2-fold decrease in affinity to ERG-potassium channels." evidence="2">
    <original>V</original>
    <variation>A</variation>
    <location>
        <position position="50"/>
    </location>
</feature>
<feature type="mutagenesis site" description="1.4-fold decrease in affinity to ERG-potassium channels." evidence="1 2">
    <original>F</original>
    <variation>A</variation>
    <location>
        <position position="53"/>
    </location>
</feature>
<feature type="mutagenesis site" description="No loss of activity. No loss of activity but gain in inhibition of native calcium- activated potassium channels with Kd of about 72 nM; when associated with K-48." evidence="1 2">
    <original>F</original>
    <variation>K</variation>
    <location>
        <position position="53"/>
    </location>
</feature>
<feature type="mutagenesis site" description="1.1-fold decrease in affinity to Kv11/ERG potassium channels." evidence="2">
    <original>D</original>
    <variation>A</variation>
    <location>
        <position position="55"/>
    </location>
</feature>
<feature type="mutagenesis site" description="3.2-fold decrease in affinity to Kv11/ERG potassium channels." evidence="2">
    <original>F</original>
    <variation>A</variation>
    <location>
        <position position="57"/>
    </location>
</feature>
<feature type="strand" evidence="15">
    <location>
        <begin position="23"/>
        <end position="27"/>
    </location>
</feature>
<feature type="helix" evidence="15">
    <location>
        <begin position="31"/>
        <end position="33"/>
    </location>
</feature>
<feature type="helix" evidence="15">
    <location>
        <begin position="34"/>
        <end position="40"/>
    </location>
</feature>
<feature type="strand" evidence="15">
    <location>
        <begin position="45"/>
        <end position="50"/>
    </location>
</feature>
<feature type="strand" evidence="15">
    <location>
        <begin position="53"/>
        <end position="57"/>
    </location>
</feature>
<dbReference type="EMBL" id="AF276623">
    <property type="protein sequence ID" value="AAK28021.1"/>
    <property type="molecule type" value="mRNA"/>
</dbReference>
<dbReference type="PDB" id="1J5J">
    <property type="method" value="NMR"/>
    <property type="chains" value="A=22-57"/>
</dbReference>
<dbReference type="PDB" id="1LGL">
    <property type="method" value="NMR"/>
    <property type="chains" value="A=22-57"/>
</dbReference>
<dbReference type="PDBsum" id="1J5J"/>
<dbReference type="PDBsum" id="1LGL"/>
<dbReference type="BMRB" id="Q9BKB7"/>
<dbReference type="SMR" id="Q9BKB7"/>
<dbReference type="EvolutionaryTrace" id="Q9BKB7"/>
<dbReference type="GO" id="GO:0005576">
    <property type="term" value="C:extracellular region"/>
    <property type="evidence" value="ECO:0007669"/>
    <property type="project" value="UniProtKB-SubCell"/>
</dbReference>
<dbReference type="GO" id="GO:0008200">
    <property type="term" value="F:ion channel inhibitor activity"/>
    <property type="evidence" value="ECO:0007669"/>
    <property type="project" value="InterPro"/>
</dbReference>
<dbReference type="GO" id="GO:0015459">
    <property type="term" value="F:potassium channel regulator activity"/>
    <property type="evidence" value="ECO:0007669"/>
    <property type="project" value="UniProtKB-KW"/>
</dbReference>
<dbReference type="GO" id="GO:0090729">
    <property type="term" value="F:toxin activity"/>
    <property type="evidence" value="ECO:0007669"/>
    <property type="project" value="UniProtKB-KW"/>
</dbReference>
<dbReference type="Gene3D" id="3.30.30.10">
    <property type="entry name" value="Knottin, scorpion toxin-like"/>
    <property type="match status" value="1"/>
</dbReference>
<dbReference type="InterPro" id="IPR036574">
    <property type="entry name" value="Scorpion_toxin-like_sf"/>
</dbReference>
<dbReference type="InterPro" id="IPR001947">
    <property type="entry name" value="Scorpion_toxinS_K_inh"/>
</dbReference>
<dbReference type="Pfam" id="PF00451">
    <property type="entry name" value="Toxin_2"/>
    <property type="match status" value="1"/>
</dbReference>
<dbReference type="SUPFAM" id="SSF57095">
    <property type="entry name" value="Scorpion toxin-like"/>
    <property type="match status" value="1"/>
</dbReference>
<protein>
    <recommendedName>
        <fullName evidence="9">Potassium channel toxin gamma-KTx 2.1</fullName>
    </recommendedName>
    <alternativeName>
        <fullName evidence="10">Neurotoxin BeKm-1</fullName>
        <shortName evidence="11">BeKm1</shortName>
    </alternativeName>
</protein>
<evidence type="ECO:0000269" key="1">
    <source>
    </source>
</evidence>
<evidence type="ECO:0000269" key="2">
    <source>
    </source>
</evidence>
<evidence type="ECO:0000269" key="3">
    <source>
    </source>
</evidence>
<evidence type="ECO:0000269" key="4">
    <source>
    </source>
</evidence>
<evidence type="ECO:0000269" key="5">
    <source>
    </source>
</evidence>
<evidence type="ECO:0000269" key="6">
    <source>
    </source>
</evidence>
<evidence type="ECO:0000269" key="7">
    <source>
    </source>
</evidence>
<evidence type="ECO:0000269" key="8">
    <source>
    </source>
</evidence>
<evidence type="ECO:0000303" key="9">
    <source>
    </source>
</evidence>
<evidence type="ECO:0000303" key="10">
    <source>
    </source>
</evidence>
<evidence type="ECO:0000305" key="11"/>
<evidence type="ECO:0000305" key="12">
    <source>
    </source>
</evidence>
<evidence type="ECO:0000305" key="13">
    <source>
    </source>
</evidence>
<evidence type="ECO:0000305" key="14">
    <source>
    </source>
</evidence>
<evidence type="ECO:0007829" key="15">
    <source>
        <dbReference type="PDB" id="1J5J"/>
    </source>
</evidence>
<sequence>MKISFVLLLTLFICSIGWSEARPTDIKCSESYQCFPVCKSRFGKTNGRCVNGFCDCF</sequence>
<accession>Q9BKB7</accession>
<keyword id="KW-0002">3D-structure</keyword>
<keyword id="KW-0903">Direct protein sequencing</keyword>
<keyword id="KW-1015">Disulfide bond</keyword>
<keyword id="KW-0872">Ion channel impairing toxin</keyword>
<keyword id="KW-0528">Neurotoxin</keyword>
<keyword id="KW-0632">Potassium channel impairing toxin</keyword>
<keyword id="KW-0964">Secreted</keyword>
<keyword id="KW-0732">Signal</keyword>
<keyword id="KW-0800">Toxin</keyword>
<keyword id="KW-1220">Voltage-gated potassium channel impairing toxin</keyword>
<name>KGX21_MESEU</name>
<comment type="function">
    <text evidence="1 3 4 6 7 8">Blocks human and/or rat Kv11.1/KCNH2/ERG1, Kv11.2/KCNH6/ERG2 and Kv11.3/KCNH7/ERG3 by binding to channel outer vestibule (S5P domain) with a 1:1 stoichiometry. Inhibition data are the following: hERG1 (reversible, Kd=7.7 nM (PubMed:16497878), IC(50)=3.3 nM (PubMed:11136720), IC(50)=11.9 nM (PubMed:21205913)), rERG1 (reversible, Kd=19 nM) (PubMed:16497878), hERG2 (reversible, Kd=77 nM) (PubMed:16497878), rERG2 (irreversible, Kd=4.2 nM) (PubMed:16497878), hERG3 (reversible, Kd=11.5 nM) (PubMed:16497878) and rERG3 (reversible, Kd=747 nM) (PubMed:16497878) potassium channels. Also has a minimal effect on rat ELK1/KCNH4 potassium channels (9% inhibition at 100 nM (PubMed:15137031)). Both this toxin and CnErgTx1 (AC Q86QT3) share mechanism of action and have overlapping binding sites on ERG1 (PubMed:12719233). The potency of these two toxins is not affected by elevating potassium ion concentration from 2 to 98 mM (PubMed:12719233). In addition, at high toxin concentrations, block of ERG1 macroscopic currents by these two toxins is incomplete (88%) (PubMed:12719233). The blockade by this toxin is preferentially closed channel state-dependent, with a component of open, but not inactive state-dependent blockade (PubMed:12860380). This toxin produces a concentration-dependent prolongation of QTc in the isolated rabbit heart (16.3% at 100 nM) (PubMed:21205913).</text>
</comment>
<comment type="subcellular location">
    <subcellularLocation>
        <location evidence="1">Secreted</location>
    </subcellularLocation>
</comment>
<comment type="tissue specificity">
    <text evidence="11">Expressed by the venom gland.</text>
</comment>
<comment type="domain">
    <text evidence="2">Has the CSalpha/beta fold, which comprises one or two short alpha helices connected to anti-parallel beta-sheets stabilized by three or four disulfide bonds.</text>
</comment>
<comment type="miscellaneous">
    <text evidence="4">The inhibition potency of the toxin for ERG1 decreases as temperature increases (IC(50)=7.6 nM and IC(50)=15.3 nM at room temperature and 37 degrees Celsius, respectively), likely due to changes in the structure of the channel binding site.</text>
</comment>
<comment type="miscellaneous">
    <text evidence="1 5">Negative results: the toxin (at 100 nM) does not inhibit hEAG1/KCNH1, hBK/KCa1.1/KCNMA1, hSK1/KCa2.1/KCNN1, rSK2/KCa2.2/KCNN2, hIK/KCa3.1/KCNN4, KCNQ1+KCNE1, KCNQ2+KCNQ3 and KCNQ4 channels (PubMed:11136720). The toxin (at 50 nM) does not inhibit Kv1.2/KCNA2, Kv1.4/KCNA4, Kv2.1/KCNB1, Kv4.3/KCND3, Kir1.1/KCNJ1 (PubMed:15137031).</text>
</comment>
<comment type="similarity">
    <text evidence="11">Belongs to the short scorpion toxin superfamily. Potassium channel inhibitor family. Gamma-KTx 2 subfamily.</text>
</comment>
<comment type="caution">
    <text evidence="13">Has been classified as a gamma-KTx toxin due to its molecular target (Kv11/ERG), but may be classified as an alpha-KTx since it shares a high level of homology in both primary and 3D structures with other alpha-KTx scorpion toxins. However, it is noteworthy that surface by which BeKm-1 interacts with ERG1 is formed by residues located in the alpha-helix and the following loop, while the traditional functional site of other alpha-KTxs is formed by residues on the beta-sheet.</text>
</comment>
<organism>
    <name type="scientific">Mesobuthus eupeus</name>
    <name type="common">Lesser Asian scorpion</name>
    <name type="synonym">Buthus eupeus</name>
    <dbReference type="NCBI Taxonomy" id="34648"/>
    <lineage>
        <taxon>Eukaryota</taxon>
        <taxon>Metazoa</taxon>
        <taxon>Ecdysozoa</taxon>
        <taxon>Arthropoda</taxon>
        <taxon>Chelicerata</taxon>
        <taxon>Arachnida</taxon>
        <taxon>Scorpiones</taxon>
        <taxon>Buthida</taxon>
        <taxon>Buthoidea</taxon>
        <taxon>Buthidae</taxon>
        <taxon>Mesobuthus</taxon>
    </lineage>
</organism>